<proteinExistence type="inferred from homology"/>
<keyword id="KW-0007">Acetylation</keyword>
<keyword id="KW-0067">ATP-binding</keyword>
<keyword id="KW-0963">Cytoplasm</keyword>
<keyword id="KW-0206">Cytoskeleton</keyword>
<keyword id="KW-0378">Hydrolase</keyword>
<keyword id="KW-0488">Methylation</keyword>
<keyword id="KW-0547">Nucleotide-binding</keyword>
<keyword id="KW-0558">Oxidation</keyword>
<protein>
    <recommendedName>
        <fullName>Actin, cytoplasmic</fullName>
        <ecNumber evidence="6">3.6.4.-</ecNumber>
    </recommendedName>
    <component>
        <recommendedName>
            <fullName>Actin, cytoplasmic, intermediate form</fullName>
        </recommendedName>
    </component>
</protein>
<organism>
    <name type="scientific">Biomphalaria obstructa</name>
    <name type="common">Bloodfluke planorb</name>
    <name type="synonym">Freshwater snail</name>
    <dbReference type="NCBI Taxonomy" id="153466"/>
    <lineage>
        <taxon>Eukaryota</taxon>
        <taxon>Metazoa</taxon>
        <taxon>Spiralia</taxon>
        <taxon>Lophotrochozoa</taxon>
        <taxon>Mollusca</taxon>
        <taxon>Gastropoda</taxon>
        <taxon>Heterobranchia</taxon>
        <taxon>Euthyneura</taxon>
        <taxon>Panpulmonata</taxon>
        <taxon>Hygrophila</taxon>
        <taxon>Lymnaeoidea</taxon>
        <taxon>Planorbidae</taxon>
        <taxon>Biomphalaria</taxon>
    </lineage>
</organism>
<reference key="1">
    <citation type="journal article" date="2002" name="J. Molluscan Stud.">
        <title>Comparative study of cytoplasmic actin DNA from six species of Planorbidae (Gastropoda: Basommatophora).</title>
        <authorList>
            <person name="Adema C.M."/>
        </authorList>
    </citation>
    <scope>NUCLEOTIDE SEQUENCE [GENOMIC DNA]</scope>
</reference>
<comment type="function">
    <text>Actins are highly conserved proteins that are involved in various types of cell motility and are ubiquitously expressed in all eukaryotic cells.</text>
</comment>
<comment type="catalytic activity">
    <reaction evidence="6">
        <text>ATP + H2O = ADP + phosphate + H(+)</text>
        <dbReference type="Rhea" id="RHEA:13065"/>
        <dbReference type="ChEBI" id="CHEBI:15377"/>
        <dbReference type="ChEBI" id="CHEBI:15378"/>
        <dbReference type="ChEBI" id="CHEBI:30616"/>
        <dbReference type="ChEBI" id="CHEBI:43474"/>
        <dbReference type="ChEBI" id="CHEBI:456216"/>
    </reaction>
</comment>
<comment type="subcellular location">
    <subcellularLocation>
        <location>Cytoplasm</location>
        <location>Cytoskeleton</location>
    </subcellularLocation>
</comment>
<comment type="PTM">
    <text evidence="4">Oxidation of Met-45 and Met-48 by MICALs (MICAL1, MICAL2 or MICAL3) to form methionine sulfoxide promotes actin filament depolymerization. MICAL1 and MICAL2 produce the (R)-S-oxide form. The (R)-S-oxide form is reverted by MSRB1 and MSRB2, which promotes actin repolymerization.</text>
</comment>
<comment type="PTM">
    <text evidence="3">Monomethylation at Lys-85 (K85me1) regulates actin-myosin interaction and actomyosin-dependent processes. Demethylation by ALKBH4 is required for maintaining actomyosin dynamics supporting normal cleavage furrow ingression during cytokinesis and cell migration.</text>
</comment>
<comment type="similarity">
    <text evidence="7">Belongs to the actin family.</text>
</comment>
<evidence type="ECO:0000250" key="1">
    <source>
        <dbReference type="UniProtKB" id="P62737"/>
    </source>
</evidence>
<evidence type="ECO:0000250" key="2">
    <source>
        <dbReference type="UniProtKB" id="P62739"/>
    </source>
</evidence>
<evidence type="ECO:0000250" key="3">
    <source>
        <dbReference type="UniProtKB" id="P68032"/>
    </source>
</evidence>
<evidence type="ECO:0000250" key="4">
    <source>
        <dbReference type="UniProtKB" id="P68033"/>
    </source>
</evidence>
<evidence type="ECO:0000250" key="5">
    <source>
        <dbReference type="UniProtKB" id="P68135"/>
    </source>
</evidence>
<evidence type="ECO:0000250" key="6">
    <source>
        <dbReference type="UniProtKB" id="P68137"/>
    </source>
</evidence>
<evidence type="ECO:0000305" key="7"/>
<feature type="initiator methionine" description="Removed">
    <location>
        <position position="1"/>
    </location>
</feature>
<feature type="chain" id="PRO_0000443007" description="Actin, cytoplasmic, intermediate form" evidence="1">
    <location>
        <begin position="2"/>
        <end position="376"/>
    </location>
</feature>
<feature type="chain" id="PRO_0000000627" description="Actin, cytoplasmic" evidence="5">
    <location>
        <begin position="3"/>
        <end position="376"/>
    </location>
</feature>
<feature type="modified residue" description="N-acetylcysteine; in intermediate form" evidence="1">
    <location>
        <position position="2"/>
    </location>
</feature>
<feature type="modified residue" description="N-acetylaspartate; in Actin, cytoplasmic" evidence="5">
    <location>
        <position position="3"/>
    </location>
</feature>
<feature type="modified residue" description="Methionine (R)-sulfoxide" evidence="4">
    <location>
        <position position="45"/>
    </location>
</feature>
<feature type="modified residue" description="Methionine (R)-sulfoxide" evidence="4">
    <location>
        <position position="48"/>
    </location>
</feature>
<feature type="modified residue" description="Tele-methylhistidine" evidence="2">
    <location>
        <position position="74"/>
    </location>
</feature>
<feature type="modified residue" description="N6-methyllysine" evidence="3">
    <location>
        <position position="85"/>
    </location>
</feature>
<sequence>MCDEDVAALVVDNGSGMCKAGFAGDDAPRAVFPSIVGRPRHQGVMVGMGQKDSYVGDEAQSKRGILTLKYPIEHGIVTNWDDMEKIWHHTFYNELRVAPEEHPVLLTEAPLNPKANREKMTQIMFETFNTPAMYVAIQAVLSLYASGRTTGIVLDSGDGVTHTVPIYEGYALPHAIMRLDLAGRDLTDYLMKILTERGYSFTTTAEREIVRDIKEKLCYVALDFEQEMQTATSSSSLEKSYELPDGQVITIGNERFRCPEALFQPSFLGMEAAGIHETTYNSIMKCDVDIRKDLYANTVLSGGSTMFPGIADRMQKEITALAPPTMKIKIIAPPERKYSVWIGGSILASLSTFQQMWISKQEYDESGPSIVHRKCF</sequence>
<name>ACTC_BIOOB</name>
<accession>Q964E1</accession>
<dbReference type="EC" id="3.6.4.-" evidence="6"/>
<dbReference type="EMBL" id="AF329439">
    <property type="protein sequence ID" value="AAK68713.1"/>
    <property type="molecule type" value="Genomic_DNA"/>
</dbReference>
<dbReference type="SMR" id="Q964E1"/>
<dbReference type="GO" id="GO:0005737">
    <property type="term" value="C:cytoplasm"/>
    <property type="evidence" value="ECO:0007669"/>
    <property type="project" value="UniProtKB-KW"/>
</dbReference>
<dbReference type="GO" id="GO:0005856">
    <property type="term" value="C:cytoskeleton"/>
    <property type="evidence" value="ECO:0007669"/>
    <property type="project" value="UniProtKB-SubCell"/>
</dbReference>
<dbReference type="GO" id="GO:0005524">
    <property type="term" value="F:ATP binding"/>
    <property type="evidence" value="ECO:0007669"/>
    <property type="project" value="UniProtKB-KW"/>
</dbReference>
<dbReference type="GO" id="GO:0016787">
    <property type="term" value="F:hydrolase activity"/>
    <property type="evidence" value="ECO:0007669"/>
    <property type="project" value="UniProtKB-KW"/>
</dbReference>
<dbReference type="CDD" id="cd10224">
    <property type="entry name" value="ASKHA_NBD_actin"/>
    <property type="match status" value="1"/>
</dbReference>
<dbReference type="FunFam" id="2.30.36.70:FF:000001">
    <property type="entry name" value="Actin, alpha skeletal muscle"/>
    <property type="match status" value="1"/>
</dbReference>
<dbReference type="FunFam" id="3.30.420.40:FF:000131">
    <property type="entry name" value="Actin, alpha skeletal muscle"/>
    <property type="match status" value="1"/>
</dbReference>
<dbReference type="FunFam" id="3.30.420.40:FF:000291">
    <property type="entry name" value="Actin, alpha skeletal muscle"/>
    <property type="match status" value="1"/>
</dbReference>
<dbReference type="FunFam" id="3.90.640.10:FF:000047">
    <property type="entry name" value="Actin, alpha skeletal muscle"/>
    <property type="match status" value="1"/>
</dbReference>
<dbReference type="FunFam" id="3.30.420.40:FF:000058">
    <property type="entry name" value="Putative actin-related protein 5"/>
    <property type="match status" value="1"/>
</dbReference>
<dbReference type="Gene3D" id="3.30.420.40">
    <property type="match status" value="2"/>
</dbReference>
<dbReference type="Gene3D" id="3.90.640.10">
    <property type="entry name" value="Actin, Chain A, domain 4"/>
    <property type="match status" value="1"/>
</dbReference>
<dbReference type="InterPro" id="IPR004000">
    <property type="entry name" value="Actin"/>
</dbReference>
<dbReference type="InterPro" id="IPR020902">
    <property type="entry name" value="Actin/actin-like_CS"/>
</dbReference>
<dbReference type="InterPro" id="IPR004001">
    <property type="entry name" value="Actin_CS"/>
</dbReference>
<dbReference type="InterPro" id="IPR043129">
    <property type="entry name" value="ATPase_NBD"/>
</dbReference>
<dbReference type="PANTHER" id="PTHR11937">
    <property type="entry name" value="ACTIN"/>
    <property type="match status" value="1"/>
</dbReference>
<dbReference type="Pfam" id="PF00022">
    <property type="entry name" value="Actin"/>
    <property type="match status" value="1"/>
</dbReference>
<dbReference type="PRINTS" id="PR00190">
    <property type="entry name" value="ACTIN"/>
</dbReference>
<dbReference type="SMART" id="SM00268">
    <property type="entry name" value="ACTIN"/>
    <property type="match status" value="1"/>
</dbReference>
<dbReference type="SUPFAM" id="SSF53067">
    <property type="entry name" value="Actin-like ATPase domain"/>
    <property type="match status" value="2"/>
</dbReference>
<dbReference type="PROSITE" id="PS00406">
    <property type="entry name" value="ACTINS_1"/>
    <property type="match status" value="1"/>
</dbReference>
<dbReference type="PROSITE" id="PS00432">
    <property type="entry name" value="ACTINS_2"/>
    <property type="match status" value="1"/>
</dbReference>
<dbReference type="PROSITE" id="PS01132">
    <property type="entry name" value="ACTINS_ACT_LIKE"/>
    <property type="match status" value="1"/>
</dbReference>